<feature type="chain" id="PRO_0000337496" description="Elongation factor Tu 1">
    <location>
        <begin position="1"/>
        <end position="396"/>
    </location>
</feature>
<feature type="domain" description="tr-type G">
    <location>
        <begin position="10"/>
        <end position="206"/>
    </location>
</feature>
<feature type="region of interest" description="G1" evidence="1">
    <location>
        <begin position="19"/>
        <end position="26"/>
    </location>
</feature>
<feature type="region of interest" description="G2" evidence="1">
    <location>
        <begin position="60"/>
        <end position="64"/>
    </location>
</feature>
<feature type="region of interest" description="G3" evidence="1">
    <location>
        <begin position="81"/>
        <end position="84"/>
    </location>
</feature>
<feature type="region of interest" description="G4" evidence="1">
    <location>
        <begin position="136"/>
        <end position="139"/>
    </location>
</feature>
<feature type="region of interest" description="G5" evidence="1">
    <location>
        <begin position="174"/>
        <end position="176"/>
    </location>
</feature>
<feature type="binding site" evidence="2">
    <location>
        <begin position="19"/>
        <end position="26"/>
    </location>
    <ligand>
        <name>GTP</name>
        <dbReference type="ChEBI" id="CHEBI:37565"/>
    </ligand>
</feature>
<feature type="binding site" evidence="2">
    <location>
        <position position="26"/>
    </location>
    <ligand>
        <name>Mg(2+)</name>
        <dbReference type="ChEBI" id="CHEBI:18420"/>
    </ligand>
</feature>
<feature type="binding site" evidence="2">
    <location>
        <begin position="81"/>
        <end position="85"/>
    </location>
    <ligand>
        <name>GTP</name>
        <dbReference type="ChEBI" id="CHEBI:37565"/>
    </ligand>
</feature>
<feature type="binding site" evidence="2">
    <location>
        <begin position="136"/>
        <end position="139"/>
    </location>
    <ligand>
        <name>GTP</name>
        <dbReference type="ChEBI" id="CHEBI:37565"/>
    </ligand>
</feature>
<sequence length="396" mass="43286">MAKAKFERNKPHCNIGTIGHVDHGKTSLTAAITKVLAETGGATFTAYDQIDKAPEEKARGITISTAHVEYETTNRHYAHVDCPGHADYVKNMITGAAQMDGAILVVSAADGPMPQTREHILLARQVGVPALVVFLNKCDMVDDPELLELVEMEVRELLSKYDFPGDDIPIVKGSALAALENSDAKLGHDAILELMKAVDAYIPQPERPIDQPFLMPVEDVFSISGRGTVVTGRVERGIVKVGEEIEIVGIRDTQKTTCTGVEMFRKLLDQGQAGDNIGCLLRGTKREDVERGQVLCKPGSVKPHTKFKAEAYILTKEEGGRHTPFFTNYRPQFYFRTTDVTGVVHLPEGTEMVMPGDNIAMEVHLIVPIAMEEKLRFAIREGGRTVGAGVVASIIE</sequence>
<comment type="function">
    <text evidence="2">GTP hydrolase that promotes the GTP-dependent binding of aminoacyl-tRNA to the A-site of ribosomes during protein biosynthesis.</text>
</comment>
<comment type="catalytic activity">
    <reaction evidence="2">
        <text>GTP + H2O = GDP + phosphate + H(+)</text>
        <dbReference type="Rhea" id="RHEA:19669"/>
        <dbReference type="ChEBI" id="CHEBI:15377"/>
        <dbReference type="ChEBI" id="CHEBI:15378"/>
        <dbReference type="ChEBI" id="CHEBI:37565"/>
        <dbReference type="ChEBI" id="CHEBI:43474"/>
        <dbReference type="ChEBI" id="CHEBI:58189"/>
        <dbReference type="EC" id="3.6.5.3"/>
    </reaction>
    <physiologicalReaction direction="left-to-right" evidence="2">
        <dbReference type="Rhea" id="RHEA:19670"/>
    </physiologicalReaction>
</comment>
<comment type="subunit">
    <text evidence="2">Monomer.</text>
</comment>
<comment type="subcellular location">
    <subcellularLocation>
        <location evidence="2">Cytoplasm</location>
    </subcellularLocation>
</comment>
<comment type="similarity">
    <text evidence="2">Belongs to the TRAFAC class translation factor GTPase superfamily. Classic translation factor GTPase family. EF-Tu/EF-1A subfamily.</text>
</comment>
<gene>
    <name evidence="2" type="primary">tuf1</name>
    <name type="ordered locus">RPD_3186</name>
</gene>
<name>EFTU1_RHOPS</name>
<accession>Q134S7</accession>
<reference key="1">
    <citation type="submission" date="2006-03" db="EMBL/GenBank/DDBJ databases">
        <title>Complete sequence of Rhodopseudomonas palustris BisB5.</title>
        <authorList>
            <consortium name="US DOE Joint Genome Institute"/>
            <person name="Copeland A."/>
            <person name="Lucas S."/>
            <person name="Lapidus A."/>
            <person name="Barry K."/>
            <person name="Detter J.C."/>
            <person name="Glavina del Rio T."/>
            <person name="Hammon N."/>
            <person name="Israni S."/>
            <person name="Dalin E."/>
            <person name="Tice H."/>
            <person name="Pitluck S."/>
            <person name="Chain P."/>
            <person name="Malfatti S."/>
            <person name="Shin M."/>
            <person name="Vergez L."/>
            <person name="Schmutz J."/>
            <person name="Larimer F."/>
            <person name="Land M."/>
            <person name="Hauser L."/>
            <person name="Pelletier D.A."/>
            <person name="Kyrpides N."/>
            <person name="Lykidis A."/>
            <person name="Oda Y."/>
            <person name="Harwood C.S."/>
            <person name="Richardson P."/>
        </authorList>
    </citation>
    <scope>NUCLEOTIDE SEQUENCE [LARGE SCALE GENOMIC DNA]</scope>
    <source>
        <strain>BisB5</strain>
    </source>
</reference>
<keyword id="KW-0963">Cytoplasm</keyword>
<keyword id="KW-0251">Elongation factor</keyword>
<keyword id="KW-0342">GTP-binding</keyword>
<keyword id="KW-0378">Hydrolase</keyword>
<keyword id="KW-0460">Magnesium</keyword>
<keyword id="KW-0479">Metal-binding</keyword>
<keyword id="KW-0547">Nucleotide-binding</keyword>
<keyword id="KW-0648">Protein biosynthesis</keyword>
<organism>
    <name type="scientific">Rhodopseudomonas palustris (strain BisB5)</name>
    <dbReference type="NCBI Taxonomy" id="316057"/>
    <lineage>
        <taxon>Bacteria</taxon>
        <taxon>Pseudomonadati</taxon>
        <taxon>Pseudomonadota</taxon>
        <taxon>Alphaproteobacteria</taxon>
        <taxon>Hyphomicrobiales</taxon>
        <taxon>Nitrobacteraceae</taxon>
        <taxon>Rhodopseudomonas</taxon>
    </lineage>
</organism>
<protein>
    <recommendedName>
        <fullName evidence="2">Elongation factor Tu 1</fullName>
        <shortName evidence="2">EF-Tu 1</shortName>
        <ecNumber evidence="2">3.6.5.3</ecNumber>
    </recommendedName>
</protein>
<proteinExistence type="inferred from homology"/>
<dbReference type="EC" id="3.6.5.3" evidence="2"/>
<dbReference type="EMBL" id="CP000283">
    <property type="protein sequence ID" value="ABE40412.1"/>
    <property type="molecule type" value="Genomic_DNA"/>
</dbReference>
<dbReference type="SMR" id="Q134S7"/>
<dbReference type="STRING" id="316057.RPD_3186"/>
<dbReference type="KEGG" id="rpd:RPD_3186"/>
<dbReference type="eggNOG" id="COG0050">
    <property type="taxonomic scope" value="Bacteria"/>
</dbReference>
<dbReference type="HOGENOM" id="CLU_007265_0_1_5"/>
<dbReference type="BioCyc" id="RPAL316057:RPD_RS15995-MONOMER"/>
<dbReference type="Proteomes" id="UP000001818">
    <property type="component" value="Chromosome"/>
</dbReference>
<dbReference type="GO" id="GO:0005829">
    <property type="term" value="C:cytosol"/>
    <property type="evidence" value="ECO:0007669"/>
    <property type="project" value="TreeGrafter"/>
</dbReference>
<dbReference type="GO" id="GO:0005525">
    <property type="term" value="F:GTP binding"/>
    <property type="evidence" value="ECO:0007669"/>
    <property type="project" value="UniProtKB-UniRule"/>
</dbReference>
<dbReference type="GO" id="GO:0003924">
    <property type="term" value="F:GTPase activity"/>
    <property type="evidence" value="ECO:0007669"/>
    <property type="project" value="InterPro"/>
</dbReference>
<dbReference type="GO" id="GO:0097216">
    <property type="term" value="F:guanosine tetraphosphate binding"/>
    <property type="evidence" value="ECO:0007669"/>
    <property type="project" value="UniProtKB-ARBA"/>
</dbReference>
<dbReference type="GO" id="GO:0003746">
    <property type="term" value="F:translation elongation factor activity"/>
    <property type="evidence" value="ECO:0007669"/>
    <property type="project" value="UniProtKB-UniRule"/>
</dbReference>
<dbReference type="CDD" id="cd01884">
    <property type="entry name" value="EF_Tu"/>
    <property type="match status" value="1"/>
</dbReference>
<dbReference type="CDD" id="cd03697">
    <property type="entry name" value="EFTU_II"/>
    <property type="match status" value="1"/>
</dbReference>
<dbReference type="CDD" id="cd03707">
    <property type="entry name" value="EFTU_III"/>
    <property type="match status" value="1"/>
</dbReference>
<dbReference type="FunFam" id="2.40.30.10:FF:000001">
    <property type="entry name" value="Elongation factor Tu"/>
    <property type="match status" value="1"/>
</dbReference>
<dbReference type="FunFam" id="3.40.50.300:FF:000003">
    <property type="entry name" value="Elongation factor Tu"/>
    <property type="match status" value="1"/>
</dbReference>
<dbReference type="Gene3D" id="3.40.50.300">
    <property type="entry name" value="P-loop containing nucleotide triphosphate hydrolases"/>
    <property type="match status" value="1"/>
</dbReference>
<dbReference type="Gene3D" id="2.40.30.10">
    <property type="entry name" value="Translation factors"/>
    <property type="match status" value="2"/>
</dbReference>
<dbReference type="HAMAP" id="MF_00118_B">
    <property type="entry name" value="EF_Tu_B"/>
    <property type="match status" value="1"/>
</dbReference>
<dbReference type="InterPro" id="IPR041709">
    <property type="entry name" value="EF-Tu_GTP-bd"/>
</dbReference>
<dbReference type="InterPro" id="IPR050055">
    <property type="entry name" value="EF-Tu_GTPase"/>
</dbReference>
<dbReference type="InterPro" id="IPR004161">
    <property type="entry name" value="EFTu-like_2"/>
</dbReference>
<dbReference type="InterPro" id="IPR033720">
    <property type="entry name" value="EFTU_2"/>
</dbReference>
<dbReference type="InterPro" id="IPR031157">
    <property type="entry name" value="G_TR_CS"/>
</dbReference>
<dbReference type="InterPro" id="IPR027417">
    <property type="entry name" value="P-loop_NTPase"/>
</dbReference>
<dbReference type="InterPro" id="IPR005225">
    <property type="entry name" value="Small_GTP-bd"/>
</dbReference>
<dbReference type="InterPro" id="IPR000795">
    <property type="entry name" value="T_Tr_GTP-bd_dom"/>
</dbReference>
<dbReference type="InterPro" id="IPR009000">
    <property type="entry name" value="Transl_B-barrel_sf"/>
</dbReference>
<dbReference type="InterPro" id="IPR009001">
    <property type="entry name" value="Transl_elong_EF1A/Init_IF2_C"/>
</dbReference>
<dbReference type="InterPro" id="IPR004541">
    <property type="entry name" value="Transl_elong_EFTu/EF1A_bac/org"/>
</dbReference>
<dbReference type="InterPro" id="IPR004160">
    <property type="entry name" value="Transl_elong_EFTu/EF1A_C"/>
</dbReference>
<dbReference type="NCBIfam" id="TIGR00485">
    <property type="entry name" value="EF-Tu"/>
    <property type="match status" value="1"/>
</dbReference>
<dbReference type="NCBIfam" id="NF000766">
    <property type="entry name" value="PRK00049.1"/>
    <property type="match status" value="1"/>
</dbReference>
<dbReference type="NCBIfam" id="NF009372">
    <property type="entry name" value="PRK12735.1"/>
    <property type="match status" value="1"/>
</dbReference>
<dbReference type="NCBIfam" id="NF009373">
    <property type="entry name" value="PRK12736.1"/>
    <property type="match status" value="1"/>
</dbReference>
<dbReference type="NCBIfam" id="TIGR00231">
    <property type="entry name" value="small_GTP"/>
    <property type="match status" value="1"/>
</dbReference>
<dbReference type="PANTHER" id="PTHR43721:SF22">
    <property type="entry name" value="ELONGATION FACTOR TU, MITOCHONDRIAL"/>
    <property type="match status" value="1"/>
</dbReference>
<dbReference type="PANTHER" id="PTHR43721">
    <property type="entry name" value="ELONGATION FACTOR TU-RELATED"/>
    <property type="match status" value="1"/>
</dbReference>
<dbReference type="Pfam" id="PF00009">
    <property type="entry name" value="GTP_EFTU"/>
    <property type="match status" value="1"/>
</dbReference>
<dbReference type="Pfam" id="PF03144">
    <property type="entry name" value="GTP_EFTU_D2"/>
    <property type="match status" value="1"/>
</dbReference>
<dbReference type="Pfam" id="PF03143">
    <property type="entry name" value="GTP_EFTU_D3"/>
    <property type="match status" value="1"/>
</dbReference>
<dbReference type="PRINTS" id="PR00315">
    <property type="entry name" value="ELONGATNFCT"/>
</dbReference>
<dbReference type="SUPFAM" id="SSF50465">
    <property type="entry name" value="EF-Tu/eEF-1alpha/eIF2-gamma C-terminal domain"/>
    <property type="match status" value="1"/>
</dbReference>
<dbReference type="SUPFAM" id="SSF52540">
    <property type="entry name" value="P-loop containing nucleoside triphosphate hydrolases"/>
    <property type="match status" value="1"/>
</dbReference>
<dbReference type="SUPFAM" id="SSF50447">
    <property type="entry name" value="Translation proteins"/>
    <property type="match status" value="1"/>
</dbReference>
<dbReference type="PROSITE" id="PS00301">
    <property type="entry name" value="G_TR_1"/>
    <property type="match status" value="1"/>
</dbReference>
<dbReference type="PROSITE" id="PS51722">
    <property type="entry name" value="G_TR_2"/>
    <property type="match status" value="1"/>
</dbReference>
<evidence type="ECO:0000250" key="1"/>
<evidence type="ECO:0000255" key="2">
    <source>
        <dbReference type="HAMAP-Rule" id="MF_00118"/>
    </source>
</evidence>